<feature type="chain" id="PRO_0000194740" description="Small ribosomal subunit protein eS21">
    <location>
        <begin position="1"/>
        <end position="83"/>
    </location>
</feature>
<accession>Q4GXP2</accession>
<sequence length="83" mass="9180">MENDAGEFVDLYCPRKCSASNRIIHAKDHASIQLCVAEVDPQTGRMTDSTKSYALCGAIRRMGESDDCIVRLTKKDGILAKNF</sequence>
<keyword id="KW-0963">Cytoplasm</keyword>
<keyword id="KW-0256">Endoplasmic reticulum</keyword>
<keyword id="KW-0687">Ribonucleoprotein</keyword>
<keyword id="KW-0689">Ribosomal protein</keyword>
<reference key="1">
    <citation type="submission" date="2005-06" db="EMBL/GenBank/DDBJ databases">
        <title>Ribosomal proteins of Coleoptera.</title>
        <authorList>
            <person name="Longhorn S.J."/>
            <person name="Vogler A.P."/>
        </authorList>
    </citation>
    <scope>NUCLEOTIDE SEQUENCE [MRNA]</scope>
</reference>
<evidence type="ECO:0000250" key="1">
    <source>
        <dbReference type="UniProtKB" id="O76927"/>
    </source>
</evidence>
<evidence type="ECO:0000250" key="2">
    <source>
        <dbReference type="UniProtKB" id="P63220"/>
    </source>
</evidence>
<evidence type="ECO:0000250" key="3">
    <source>
        <dbReference type="UniProtKB" id="P63221"/>
    </source>
</evidence>
<evidence type="ECO:0000305" key="4"/>
<protein>
    <recommendedName>
        <fullName evidence="4">Small ribosomal subunit protein eS21</fullName>
    </recommendedName>
    <alternativeName>
        <fullName>40S ribosomal protein S21</fullName>
    </alternativeName>
</protein>
<gene>
    <name type="primary">RpS21</name>
</gene>
<name>RS21_BIPLU</name>
<dbReference type="EMBL" id="AM048981">
    <property type="protein sequence ID" value="CAJ17215.1"/>
    <property type="molecule type" value="mRNA"/>
</dbReference>
<dbReference type="SMR" id="Q4GXP2"/>
<dbReference type="GO" id="GO:0005829">
    <property type="term" value="C:cytosol"/>
    <property type="evidence" value="ECO:0007669"/>
    <property type="project" value="UniProtKB-SubCell"/>
</dbReference>
<dbReference type="GO" id="GO:1990904">
    <property type="term" value="C:ribonucleoprotein complex"/>
    <property type="evidence" value="ECO:0007669"/>
    <property type="project" value="UniProtKB-KW"/>
</dbReference>
<dbReference type="GO" id="GO:0005840">
    <property type="term" value="C:ribosome"/>
    <property type="evidence" value="ECO:0007669"/>
    <property type="project" value="UniProtKB-KW"/>
</dbReference>
<dbReference type="GO" id="GO:0005791">
    <property type="term" value="C:rough endoplasmic reticulum"/>
    <property type="evidence" value="ECO:0007669"/>
    <property type="project" value="UniProtKB-SubCell"/>
</dbReference>
<dbReference type="GO" id="GO:0003735">
    <property type="term" value="F:structural constituent of ribosome"/>
    <property type="evidence" value="ECO:0007669"/>
    <property type="project" value="InterPro"/>
</dbReference>
<dbReference type="GO" id="GO:0006412">
    <property type="term" value="P:translation"/>
    <property type="evidence" value="ECO:0007669"/>
    <property type="project" value="InterPro"/>
</dbReference>
<dbReference type="FunFam" id="3.30.1230.20:FF:000001">
    <property type="entry name" value="40S ribosomal protein S21"/>
    <property type="match status" value="1"/>
</dbReference>
<dbReference type="Gene3D" id="3.30.1230.20">
    <property type="match status" value="1"/>
</dbReference>
<dbReference type="InterPro" id="IPR001931">
    <property type="entry name" value="Ribosomal_eS21"/>
</dbReference>
<dbReference type="InterPro" id="IPR018279">
    <property type="entry name" value="Ribosomal_eS21_CS"/>
</dbReference>
<dbReference type="InterPro" id="IPR038579">
    <property type="entry name" value="Ribosomal_eS21_sf"/>
</dbReference>
<dbReference type="PANTHER" id="PTHR10442">
    <property type="entry name" value="40S RIBOSOMAL PROTEIN S21"/>
    <property type="match status" value="1"/>
</dbReference>
<dbReference type="Pfam" id="PF01249">
    <property type="entry name" value="Ribosomal_S21e"/>
    <property type="match status" value="1"/>
</dbReference>
<dbReference type="PIRSF" id="PIRSF002148">
    <property type="entry name" value="Ribosomal_S21e"/>
    <property type="match status" value="1"/>
</dbReference>
<dbReference type="PROSITE" id="PS00996">
    <property type="entry name" value="RIBOSOMAL_S21E"/>
    <property type="match status" value="1"/>
</dbReference>
<proteinExistence type="inferred from homology"/>
<organism>
    <name type="scientific">Biphyllus lunatus</name>
    <name type="common">Beetle</name>
    <dbReference type="NCBI Taxonomy" id="197003"/>
    <lineage>
        <taxon>Eukaryota</taxon>
        <taxon>Metazoa</taxon>
        <taxon>Ecdysozoa</taxon>
        <taxon>Arthropoda</taxon>
        <taxon>Hexapoda</taxon>
        <taxon>Insecta</taxon>
        <taxon>Pterygota</taxon>
        <taxon>Neoptera</taxon>
        <taxon>Endopterygota</taxon>
        <taxon>Coleoptera</taxon>
        <taxon>Polyphaga</taxon>
        <taxon>Cucujiformia</taxon>
        <taxon>Biphyllidae</taxon>
        <taxon>Biphyllus</taxon>
    </lineage>
</organism>
<comment type="subunit">
    <text evidence="1">Component of the 40S small ribosomal subunit.</text>
</comment>
<comment type="subcellular location">
    <subcellularLocation>
        <location evidence="2">Cytoplasm</location>
        <location evidence="2">Cytosol</location>
    </subcellularLocation>
    <subcellularLocation>
        <location evidence="2">Cytoplasm</location>
    </subcellularLocation>
    <subcellularLocation>
        <location evidence="3">Rough endoplasmic reticulum</location>
    </subcellularLocation>
    <text evidence="2 3">Detected on cytosolic polysomes (By similarity). Detected in ribosomes that are associated with the rough endoplasmic reticulum (By similarity).</text>
</comment>
<comment type="similarity">
    <text evidence="4">Belongs to the eukaryotic ribosomal protein eS21 family.</text>
</comment>